<keyword id="KW-0002">3D-structure</keyword>
<keyword id="KW-0010">Activator</keyword>
<keyword id="KW-0025">Alternative splicing</keyword>
<keyword id="KW-0156">Chromatin regulator</keyword>
<keyword id="KW-0963">Cytoplasm</keyword>
<keyword id="KW-0378">Hydrolase</keyword>
<keyword id="KW-0479">Metal-binding</keyword>
<keyword id="KW-0539">Nucleus</keyword>
<keyword id="KW-0645">Protease</keyword>
<keyword id="KW-1267">Proteomics identification</keyword>
<keyword id="KW-1185">Reference proteome</keyword>
<keyword id="KW-0788">Thiol protease</keyword>
<keyword id="KW-0804">Transcription</keyword>
<keyword id="KW-0805">Transcription regulation</keyword>
<keyword id="KW-0833">Ubl conjugation pathway</keyword>
<keyword id="KW-0862">Zinc</keyword>
<comment type="function">
    <text evidence="1 5 8 9">Deubiquitinates histone H2A, a specific tag for epigenetic transcriptional repression, thereby acting as a coactivator (By similarity). Deubiquitination of histone H2A releaves the repression of di- and trimethylation of histone H3 at 'Lys-4', resulting in regulation of transcriptional initiation (By similarity). Regulates gene expression via histone H2A deubiquitination (By similarity). Deubiquitinates BAZ2A/TIP5 leading to its stabilization (PubMed:26100909). Also capable of removing NEDD8 from NEDD8 conjugates but has no effect on Sentrin-1 conjugates (PubMed:10799498). Also acts as a negative regulator of the ribosome quality control (RQC) by mediating deubiquitination of 40S ribosomal proteins RPS10/eS10 and RPS20/uS10, thereby antagonizing ZNF598-mediated 40S ubiquitination (PubMed:32011234).</text>
</comment>
<comment type="catalytic activity">
    <reaction evidence="5 9">
        <text>Thiol-dependent hydrolysis of ester, thioester, amide, peptide and isopeptide bonds formed by the C-terminal Gly of ubiquitin (a 76-residue protein attached to proteins as an intracellular targeting signal).</text>
        <dbReference type="EC" id="3.4.19.12"/>
    </reaction>
</comment>
<comment type="subunit">
    <text evidence="8">Interacts with BEND3.</text>
</comment>
<comment type="interaction">
    <interactant intactId="EBI-373242">
        <id>Q9UK80</id>
    </interactant>
    <interactant intactId="EBI-10173507">
        <id>Q6UY14-3</id>
        <label>ADAMTSL4</label>
    </interactant>
    <organismsDiffer>false</organismsDiffer>
    <experiments>3</experiments>
</comment>
<comment type="interaction">
    <interactant intactId="EBI-373242">
        <id>Q9UK80</id>
    </interactant>
    <interactant intactId="EBI-11088043">
        <id>Q16630-2</id>
        <label>CPSF6</label>
    </interactant>
    <organismsDiffer>false</organismsDiffer>
    <experiments>3</experiments>
</comment>
<comment type="interaction">
    <interactant intactId="EBI-373242">
        <id>Q9UK80</id>
    </interactant>
    <interactant intactId="EBI-743414">
        <id>O95967</id>
        <label>EFEMP2</label>
    </interactant>
    <organismsDiffer>false</organismsDiffer>
    <experiments>3</experiments>
</comment>
<comment type="interaction">
    <interactant intactId="EBI-373242">
        <id>Q9UK80</id>
    </interactant>
    <interactant intactId="EBI-1188075">
        <id>Q9NYD6</id>
        <label>HOXC10</label>
    </interactant>
    <organismsDiffer>false</organismsDiffer>
    <experiments>3</experiments>
</comment>
<comment type="interaction">
    <interactant intactId="EBI-373242">
        <id>Q9UK80</id>
    </interactant>
    <interactant intactId="EBI-4397613">
        <id>Q7L273</id>
        <label>KCTD9</label>
    </interactant>
    <organismsDiffer>false</organismsDiffer>
    <experiments>3</experiments>
</comment>
<comment type="interaction">
    <interactant intactId="EBI-373242">
        <id>Q9UK80</id>
    </interactant>
    <interactant intactId="EBI-10171697">
        <id>Q6A162</id>
        <label>KRT40</label>
    </interactant>
    <organismsDiffer>false</organismsDiffer>
    <experiments>3</experiments>
</comment>
<comment type="interaction">
    <interactant intactId="EBI-373242">
        <id>Q9UK80</id>
    </interactant>
    <interactant intactId="EBI-714860">
        <id>P09936</id>
        <label>UCHL1</label>
    </interactant>
    <organismsDiffer>false</organismsDiffer>
    <experiments>4</experiments>
</comment>
<comment type="subcellular location">
    <subcellularLocation>
        <location evidence="7">Cytoplasm</location>
    </subcellularLocation>
    <subcellularLocation>
        <location evidence="7">Nucleus</location>
    </subcellularLocation>
</comment>
<comment type="alternative products">
    <event type="alternative splicing"/>
    <isoform>
        <id>Q9UK80-1</id>
        <name>1</name>
        <sequence type="displayed"/>
    </isoform>
    <isoform>
        <id>Q9UK80-2</id>
        <name>2</name>
        <sequence type="described" ref="VSP_036717 VSP_036718"/>
    </isoform>
    <isoform>
        <id>Q9UK80-3</id>
        <name>3</name>
        <sequence type="described" ref="VSP_036719"/>
    </isoform>
</comment>
<comment type="tissue specificity">
    <text evidence="5">Highly expressed in heart, pancreas and skeletal muscle. Also expressed in brain, placenta, liver and kidney, and at very low level in lung.</text>
</comment>
<comment type="similarity">
    <text evidence="14">Belongs to the peptidase C19 family. USP21 subfamily.</text>
</comment>
<comment type="sequence caution" evidence="14">
    <conflict type="frameshift">
        <sequence resource="EMBL-CDS" id="AAF61308"/>
    </conflict>
</comment>
<comment type="sequence caution" evidence="14">
    <conflict type="frameshift">
        <sequence resource="EMBL-CDS" id="AAG17222"/>
    </conflict>
</comment>
<comment type="sequence caution" evidence="14">
    <conflict type="erroneous initiation">
        <sequence resource="EMBL-CDS" id="BAD92136"/>
    </conflict>
    <text>Extended N-terminus.</text>
</comment>
<feature type="chain" id="PRO_0000080648" description="Ubiquitin carboxyl-terminal hydrolase 21">
    <location>
        <begin position="1"/>
        <end position="565"/>
    </location>
</feature>
<feature type="domain" description="USP">
    <location>
        <begin position="212"/>
        <end position="558"/>
    </location>
</feature>
<feature type="region of interest" description="Disordered" evidence="4">
    <location>
        <begin position="1"/>
        <end position="103"/>
    </location>
</feature>
<feature type="short sequence motif" description="Nuclear export signal" evidence="7">
    <location>
        <begin position="134"/>
        <end position="152"/>
    </location>
</feature>
<feature type="compositionally biased region" description="Basic and acidic residues" evidence="4">
    <location>
        <begin position="1"/>
        <end position="14"/>
    </location>
</feature>
<feature type="compositionally biased region" description="Pro residues" evidence="4">
    <location>
        <begin position="48"/>
        <end position="57"/>
    </location>
</feature>
<feature type="compositionally biased region" description="Basic and acidic residues" evidence="4">
    <location>
        <begin position="58"/>
        <end position="70"/>
    </location>
</feature>
<feature type="active site" description="Nucleophile" evidence="15 16">
    <location>
        <position position="221"/>
    </location>
</feature>
<feature type="active site" description="Proton acceptor" evidence="2 3">
    <location>
        <position position="518"/>
    </location>
</feature>
<feature type="binding site" evidence="6 18">
    <location>
        <position position="384"/>
    </location>
    <ligand>
        <name>Zn(2+)</name>
        <dbReference type="ChEBI" id="CHEBI:29105"/>
    </ligand>
</feature>
<feature type="binding site" evidence="6 18">
    <location>
        <position position="387"/>
    </location>
    <ligand>
        <name>Zn(2+)</name>
        <dbReference type="ChEBI" id="CHEBI:29105"/>
    </ligand>
</feature>
<feature type="binding site" evidence="6 18">
    <location>
        <position position="437"/>
    </location>
    <ligand>
        <name>Zn(2+)</name>
        <dbReference type="ChEBI" id="CHEBI:29105"/>
    </ligand>
</feature>
<feature type="binding site" evidence="6 18">
    <location>
        <position position="440"/>
    </location>
    <ligand>
        <name>Zn(2+)</name>
        <dbReference type="ChEBI" id="CHEBI:29105"/>
    </ligand>
</feature>
<feature type="splice variant" id="VSP_036717" description="In isoform 2." evidence="13">
    <original>DLFVGQLKSCL</original>
    <variation>GMEWGKAMREN</variation>
    <location>
        <begin position="372"/>
        <end position="382"/>
    </location>
</feature>
<feature type="splice variant" id="VSP_036718" description="In isoform 2." evidence="13">
    <location>
        <begin position="383"/>
        <end position="565"/>
    </location>
</feature>
<feature type="splice variant" id="VSP_036719" description="In isoform 3." evidence="12">
    <location>
        <begin position="498"/>
        <end position="511"/>
    </location>
</feature>
<feature type="sequence variant" id="VAR_051531" description="In dbSNP:rs34779722.">
    <original>P</original>
    <variation>S</variation>
    <location>
        <position position="91"/>
    </location>
</feature>
<feature type="sequence variant" id="VAR_051532" description="In dbSNP:rs17356051.">
    <original>G</original>
    <variation>D</variation>
    <location>
        <position position="321"/>
    </location>
</feature>
<feature type="sequence variant" id="VAR_051533" description="In dbSNP:rs1127525.">
    <original>P</original>
    <variation>T</variation>
    <location>
        <position position="336"/>
    </location>
</feature>
<feature type="mutagenesis site" description="Abolishes ubiquitin thioesterase activity." evidence="5 9">
    <original>C</original>
    <variation>A</variation>
    <variation>S</variation>
    <location>
        <position position="221"/>
    </location>
</feature>
<feature type="sequence conflict" description="In Ref. 8; AAH90946." evidence="14" ref="8">
    <original>A</original>
    <variation>G</variation>
    <location>
        <position position="42"/>
    </location>
</feature>
<feature type="sequence conflict" description="In Ref. 2; AAF61308." evidence="14" ref="2">
    <original>P</original>
    <variation>L</variation>
    <location>
        <position position="272"/>
    </location>
</feature>
<feature type="sequence conflict" description="In Ref. 2; AAF61308." evidence="14" ref="2">
    <original>S</original>
    <variation>F</variation>
    <location>
        <position position="415"/>
    </location>
</feature>
<feature type="strand" evidence="21">
    <location>
        <begin position="217"/>
        <end position="219"/>
    </location>
</feature>
<feature type="helix" evidence="20">
    <location>
        <begin position="221"/>
        <end position="231"/>
    </location>
</feature>
<feature type="helix" evidence="20">
    <location>
        <begin position="234"/>
        <end position="242"/>
    </location>
</feature>
<feature type="helix" evidence="20">
    <location>
        <begin position="245"/>
        <end position="248"/>
    </location>
</feature>
<feature type="helix" evidence="20">
    <location>
        <begin position="257"/>
        <end position="268"/>
    </location>
</feature>
<feature type="helix" evidence="20">
    <location>
        <begin position="281"/>
        <end position="290"/>
    </location>
</feature>
<feature type="helix" evidence="20">
    <location>
        <begin position="292"/>
        <end position="294"/>
    </location>
</feature>
<feature type="helix" evidence="20">
    <location>
        <begin position="302"/>
        <end position="317"/>
    </location>
</feature>
<feature type="helix" evidence="20">
    <location>
        <begin position="351"/>
        <end position="365"/>
    </location>
</feature>
<feature type="helix" evidence="20">
    <location>
        <begin position="369"/>
        <end position="374"/>
    </location>
</feature>
<feature type="strand" evidence="20">
    <location>
        <begin position="376"/>
        <end position="384"/>
    </location>
</feature>
<feature type="turn" evidence="20">
    <location>
        <begin position="385"/>
        <end position="387"/>
    </location>
</feature>
<feature type="strand" evidence="20">
    <location>
        <begin position="390"/>
        <end position="402"/>
    </location>
</feature>
<feature type="helix" evidence="20">
    <location>
        <begin position="416"/>
        <end position="424"/>
    </location>
</feature>
<feature type="strand" evidence="20">
    <location>
        <begin position="427"/>
        <end position="429"/>
    </location>
</feature>
<feature type="helix" evidence="20">
    <location>
        <begin position="431"/>
        <end position="433"/>
    </location>
</feature>
<feature type="strand" evidence="20">
    <location>
        <begin position="438"/>
        <end position="440"/>
    </location>
</feature>
<feature type="strand" evidence="20">
    <location>
        <begin position="446"/>
        <end position="454"/>
    </location>
</feature>
<feature type="strand" evidence="20">
    <location>
        <begin position="457"/>
        <end position="463"/>
    </location>
</feature>
<feature type="strand" evidence="19">
    <location>
        <begin position="466"/>
        <end position="471"/>
    </location>
</feature>
<feature type="strand" evidence="19">
    <location>
        <begin position="473"/>
        <end position="475"/>
    </location>
</feature>
<feature type="helix" evidence="20">
    <location>
        <begin position="490"/>
        <end position="492"/>
    </location>
</feature>
<feature type="strand" evidence="20">
    <location>
        <begin position="501"/>
        <end position="513"/>
    </location>
</feature>
<feature type="strand" evidence="20">
    <location>
        <begin position="516"/>
        <end position="525"/>
    </location>
</feature>
<feature type="strand" evidence="20">
    <location>
        <begin position="528"/>
        <end position="533"/>
    </location>
</feature>
<feature type="strand" evidence="20">
    <location>
        <begin position="536"/>
        <end position="540"/>
    </location>
</feature>
<feature type="helix" evidence="20">
    <location>
        <begin position="542"/>
        <end position="546"/>
    </location>
</feature>
<feature type="strand" evidence="20">
    <location>
        <begin position="551"/>
        <end position="557"/>
    </location>
</feature>
<accession>Q9UK80</accession>
<accession>Q59H60</accession>
<accession>Q5BKT5</accession>
<accession>Q5VTW9</accession>
<accession>Q5VTX0</accession>
<accession>Q9BTV1</accession>
<accession>Q9HBS2</accession>
<accession>Q9NYN4</accession>
<sequence length="565" mass="62656">MPQASEHRLGRTREPPVNIQPRVGSKLPFAPRARSKERRNPASGPNPMLRPLPPRPGLPDERLKKLELGRGRTSGPRPRGPLRADHGVPLPGSPPPTVALPLPSRTNLARSKSVSSGDLRPMGIALGGHRGTGELGAALSRLALRPEPPTLRRSTSLRRLGGFPGPPTLFSIRTEPPASHGSFHMISARSSEPFYSDDKMAHHTLLLGSGHVGLRNLGNTCFLNAVLQCLSSTRPLRDFCLRRDFRQEVPGGGRAQELTEAFADVIGALWHPDSCEAVNPTRFRAVFQKYVPSFSGYSQQDAQEFLKLLMERLHLEINRRGRRAPPILANGPVPSPPRRGGALLEEPELSDDDRANLMWKRYLEREDSKIVDLFVGQLKSCLKCQACGYRSTTFEVFCDLSLPIPKKGFAGGKVSLRDCFNLFTKEEELESENAPVCDRCRQKTRSTKKLTVQRFPRILVLHLNRFSASRGSIKKSSVGVDFPLQRLSLGDFASDKAGSPVYQLYALCNHSGSVHYGHYTALCRCQTGWHVYNDSRVSPVSENQVASSEGYVLFYQLMQEPPRCL</sequence>
<reference key="1">
    <citation type="journal article" date="2000" name="Biochim. Biophys. Acta">
        <title>Sequencing, tissue distribution and chromosomal assignment of a novel ubiquitin-specific protease USP23.</title>
        <authorList>
            <person name="Smith T.S."/>
            <person name="Southan C."/>
        </authorList>
    </citation>
    <scope>NUCLEOTIDE SEQUENCE [MRNA] (ISOFORM 1)</scope>
</reference>
<reference key="2">
    <citation type="journal article" date="2000" name="J. Biol. Chem.">
        <title>Identification of a novel isopeptidase with dual specificity for ubiquitin- and NEDD8-conjugated proteins.</title>
        <authorList>
            <person name="Gong L."/>
            <person name="Kamitani T."/>
            <person name="Millas S."/>
            <person name="Yeh E.T.H."/>
        </authorList>
    </citation>
    <scope>NUCLEOTIDE SEQUENCE [MRNA] (ISOFORM 1)</scope>
    <scope>FUNCTION</scope>
    <scope>TISSUE SPECIFICITY</scope>
    <scope>MUTAGENESIS OF CYS-221</scope>
    <source>
        <tissue>Placenta</tissue>
    </source>
</reference>
<reference key="3">
    <citation type="journal article" date="2004" name="Nat. Genet.">
        <title>Complete sequencing and characterization of 21,243 full-length human cDNAs.</title>
        <authorList>
            <person name="Ota T."/>
            <person name="Suzuki Y."/>
            <person name="Nishikawa T."/>
            <person name="Otsuki T."/>
            <person name="Sugiyama T."/>
            <person name="Irie R."/>
            <person name="Wakamatsu A."/>
            <person name="Hayashi K."/>
            <person name="Sato H."/>
            <person name="Nagai K."/>
            <person name="Kimura K."/>
            <person name="Makita H."/>
            <person name="Sekine M."/>
            <person name="Obayashi M."/>
            <person name="Nishi T."/>
            <person name="Shibahara T."/>
            <person name="Tanaka T."/>
            <person name="Ishii S."/>
            <person name="Yamamoto J."/>
            <person name="Saito K."/>
            <person name="Kawai Y."/>
            <person name="Isono Y."/>
            <person name="Nakamura Y."/>
            <person name="Nagahari K."/>
            <person name="Murakami K."/>
            <person name="Yasuda T."/>
            <person name="Iwayanagi T."/>
            <person name="Wagatsuma M."/>
            <person name="Shiratori A."/>
            <person name="Sudo H."/>
            <person name="Hosoiri T."/>
            <person name="Kaku Y."/>
            <person name="Kodaira H."/>
            <person name="Kondo H."/>
            <person name="Sugawara M."/>
            <person name="Takahashi M."/>
            <person name="Kanda K."/>
            <person name="Yokoi T."/>
            <person name="Furuya T."/>
            <person name="Kikkawa E."/>
            <person name="Omura Y."/>
            <person name="Abe K."/>
            <person name="Kamihara K."/>
            <person name="Katsuta N."/>
            <person name="Sato K."/>
            <person name="Tanikawa M."/>
            <person name="Yamazaki M."/>
            <person name="Ninomiya K."/>
            <person name="Ishibashi T."/>
            <person name="Yamashita H."/>
            <person name="Murakawa K."/>
            <person name="Fujimori K."/>
            <person name="Tanai H."/>
            <person name="Kimata M."/>
            <person name="Watanabe M."/>
            <person name="Hiraoka S."/>
            <person name="Chiba Y."/>
            <person name="Ishida S."/>
            <person name="Ono Y."/>
            <person name="Takiguchi S."/>
            <person name="Watanabe S."/>
            <person name="Yosida M."/>
            <person name="Hotuta T."/>
            <person name="Kusano J."/>
            <person name="Kanehori K."/>
            <person name="Takahashi-Fujii A."/>
            <person name="Hara H."/>
            <person name="Tanase T.-O."/>
            <person name="Nomura Y."/>
            <person name="Togiya S."/>
            <person name="Komai F."/>
            <person name="Hara R."/>
            <person name="Takeuchi K."/>
            <person name="Arita M."/>
            <person name="Imose N."/>
            <person name="Musashino K."/>
            <person name="Yuuki H."/>
            <person name="Oshima A."/>
            <person name="Sasaki N."/>
            <person name="Aotsuka S."/>
            <person name="Yoshikawa Y."/>
            <person name="Matsunawa H."/>
            <person name="Ichihara T."/>
            <person name="Shiohata N."/>
            <person name="Sano S."/>
            <person name="Moriya S."/>
            <person name="Momiyama H."/>
            <person name="Satoh N."/>
            <person name="Takami S."/>
            <person name="Terashima Y."/>
            <person name="Suzuki O."/>
            <person name="Nakagawa S."/>
            <person name="Senoh A."/>
            <person name="Mizoguchi H."/>
            <person name="Goto Y."/>
            <person name="Shimizu F."/>
            <person name="Wakebe H."/>
            <person name="Hishigaki H."/>
            <person name="Watanabe T."/>
            <person name="Sugiyama A."/>
            <person name="Takemoto M."/>
            <person name="Kawakami B."/>
            <person name="Yamazaki M."/>
            <person name="Watanabe K."/>
            <person name="Kumagai A."/>
            <person name="Itakura S."/>
            <person name="Fukuzumi Y."/>
            <person name="Fujimori Y."/>
            <person name="Komiyama M."/>
            <person name="Tashiro H."/>
            <person name="Tanigami A."/>
            <person name="Fujiwara T."/>
            <person name="Ono T."/>
            <person name="Yamada K."/>
            <person name="Fujii Y."/>
            <person name="Ozaki K."/>
            <person name="Hirao M."/>
            <person name="Ohmori Y."/>
            <person name="Kawabata A."/>
            <person name="Hikiji T."/>
            <person name="Kobatake N."/>
            <person name="Inagaki H."/>
            <person name="Ikema Y."/>
            <person name="Okamoto S."/>
            <person name="Okitani R."/>
            <person name="Kawakami T."/>
            <person name="Noguchi S."/>
            <person name="Itoh T."/>
            <person name="Shigeta K."/>
            <person name="Senba T."/>
            <person name="Matsumura K."/>
            <person name="Nakajima Y."/>
            <person name="Mizuno T."/>
            <person name="Morinaga M."/>
            <person name="Sasaki M."/>
            <person name="Togashi T."/>
            <person name="Oyama M."/>
            <person name="Hata H."/>
            <person name="Watanabe M."/>
            <person name="Komatsu T."/>
            <person name="Mizushima-Sugano J."/>
            <person name="Satoh T."/>
            <person name="Shirai Y."/>
            <person name="Takahashi Y."/>
            <person name="Nakagawa K."/>
            <person name="Okumura K."/>
            <person name="Nagase T."/>
            <person name="Nomura N."/>
            <person name="Kikuchi H."/>
            <person name="Masuho Y."/>
            <person name="Yamashita R."/>
            <person name="Nakai K."/>
            <person name="Yada T."/>
            <person name="Nakamura Y."/>
            <person name="Ohara O."/>
            <person name="Isogai T."/>
            <person name="Sugano S."/>
        </authorList>
    </citation>
    <scope>NUCLEOTIDE SEQUENCE [LARGE SCALE MRNA] (ISOFORM 1)</scope>
    <source>
        <tissue>Testis</tissue>
    </source>
</reference>
<reference key="4">
    <citation type="journal article" date="2004" name="Proc. Natl. Acad. Sci. U.S.A.">
        <title>Large-scale cDNA transfection screening for genes related to cancer development and progression.</title>
        <authorList>
            <person name="Wan D."/>
            <person name="Gong Y."/>
            <person name="Qin W."/>
            <person name="Zhang P."/>
            <person name="Li J."/>
            <person name="Wei L."/>
            <person name="Zhou X."/>
            <person name="Li H."/>
            <person name="Qiu X."/>
            <person name="Zhong F."/>
            <person name="He L."/>
            <person name="Yu J."/>
            <person name="Yao G."/>
            <person name="Jiang H."/>
            <person name="Qian L."/>
            <person name="Yu Y."/>
            <person name="Shu H."/>
            <person name="Chen X."/>
            <person name="Xu H."/>
            <person name="Guo M."/>
            <person name="Pan Z."/>
            <person name="Chen Y."/>
            <person name="Ge C."/>
            <person name="Yang S."/>
            <person name="Gu J."/>
        </authorList>
    </citation>
    <scope>NUCLEOTIDE SEQUENCE [LARGE SCALE MRNA] (ISOFORM 3)</scope>
</reference>
<reference key="5">
    <citation type="submission" date="2005-03" db="EMBL/GenBank/DDBJ databases">
        <authorList>
            <person name="Totoki Y."/>
            <person name="Toyoda A."/>
            <person name="Takeda T."/>
            <person name="Sakaki Y."/>
            <person name="Tanaka A."/>
            <person name="Yokoyama S."/>
            <person name="Ohara O."/>
            <person name="Nagase T."/>
            <person name="Kikuno R.F."/>
        </authorList>
    </citation>
    <scope>NUCLEOTIDE SEQUENCE [LARGE SCALE MRNA] (ISOFORM 2)</scope>
    <source>
        <tissue>Brain</tissue>
    </source>
</reference>
<reference key="6">
    <citation type="journal article" date="2006" name="Nature">
        <title>The DNA sequence and biological annotation of human chromosome 1.</title>
        <authorList>
            <person name="Gregory S.G."/>
            <person name="Barlow K.F."/>
            <person name="McLay K.E."/>
            <person name="Kaul R."/>
            <person name="Swarbreck D."/>
            <person name="Dunham A."/>
            <person name="Scott C.E."/>
            <person name="Howe K.L."/>
            <person name="Woodfine K."/>
            <person name="Spencer C.C.A."/>
            <person name="Jones M.C."/>
            <person name="Gillson C."/>
            <person name="Searle S."/>
            <person name="Zhou Y."/>
            <person name="Kokocinski F."/>
            <person name="McDonald L."/>
            <person name="Evans R."/>
            <person name="Phillips K."/>
            <person name="Atkinson A."/>
            <person name="Cooper R."/>
            <person name="Jones C."/>
            <person name="Hall R.E."/>
            <person name="Andrews T.D."/>
            <person name="Lloyd C."/>
            <person name="Ainscough R."/>
            <person name="Almeida J.P."/>
            <person name="Ambrose K.D."/>
            <person name="Anderson F."/>
            <person name="Andrew R.W."/>
            <person name="Ashwell R.I.S."/>
            <person name="Aubin K."/>
            <person name="Babbage A.K."/>
            <person name="Bagguley C.L."/>
            <person name="Bailey J."/>
            <person name="Beasley H."/>
            <person name="Bethel G."/>
            <person name="Bird C.P."/>
            <person name="Bray-Allen S."/>
            <person name="Brown J.Y."/>
            <person name="Brown A.J."/>
            <person name="Buckley D."/>
            <person name="Burton J."/>
            <person name="Bye J."/>
            <person name="Carder C."/>
            <person name="Chapman J.C."/>
            <person name="Clark S.Y."/>
            <person name="Clarke G."/>
            <person name="Clee C."/>
            <person name="Cobley V."/>
            <person name="Collier R.E."/>
            <person name="Corby N."/>
            <person name="Coville G.J."/>
            <person name="Davies J."/>
            <person name="Deadman R."/>
            <person name="Dunn M."/>
            <person name="Earthrowl M."/>
            <person name="Ellington A.G."/>
            <person name="Errington H."/>
            <person name="Frankish A."/>
            <person name="Frankland J."/>
            <person name="French L."/>
            <person name="Garner P."/>
            <person name="Garnett J."/>
            <person name="Gay L."/>
            <person name="Ghori M.R.J."/>
            <person name="Gibson R."/>
            <person name="Gilby L.M."/>
            <person name="Gillett W."/>
            <person name="Glithero R.J."/>
            <person name="Grafham D.V."/>
            <person name="Griffiths C."/>
            <person name="Griffiths-Jones S."/>
            <person name="Grocock R."/>
            <person name="Hammond S."/>
            <person name="Harrison E.S.I."/>
            <person name="Hart E."/>
            <person name="Haugen E."/>
            <person name="Heath P.D."/>
            <person name="Holmes S."/>
            <person name="Holt K."/>
            <person name="Howden P.J."/>
            <person name="Hunt A.R."/>
            <person name="Hunt S.E."/>
            <person name="Hunter G."/>
            <person name="Isherwood J."/>
            <person name="James R."/>
            <person name="Johnson C."/>
            <person name="Johnson D."/>
            <person name="Joy A."/>
            <person name="Kay M."/>
            <person name="Kershaw J.K."/>
            <person name="Kibukawa M."/>
            <person name="Kimberley A.M."/>
            <person name="King A."/>
            <person name="Knights A.J."/>
            <person name="Lad H."/>
            <person name="Laird G."/>
            <person name="Lawlor S."/>
            <person name="Leongamornlert D.A."/>
            <person name="Lloyd D.M."/>
            <person name="Loveland J."/>
            <person name="Lovell J."/>
            <person name="Lush M.J."/>
            <person name="Lyne R."/>
            <person name="Martin S."/>
            <person name="Mashreghi-Mohammadi M."/>
            <person name="Matthews L."/>
            <person name="Matthews N.S.W."/>
            <person name="McLaren S."/>
            <person name="Milne S."/>
            <person name="Mistry S."/>
            <person name="Moore M.J.F."/>
            <person name="Nickerson T."/>
            <person name="O'Dell C.N."/>
            <person name="Oliver K."/>
            <person name="Palmeiri A."/>
            <person name="Palmer S.A."/>
            <person name="Parker A."/>
            <person name="Patel D."/>
            <person name="Pearce A.V."/>
            <person name="Peck A.I."/>
            <person name="Pelan S."/>
            <person name="Phelps K."/>
            <person name="Phillimore B.J."/>
            <person name="Plumb R."/>
            <person name="Rajan J."/>
            <person name="Raymond C."/>
            <person name="Rouse G."/>
            <person name="Saenphimmachak C."/>
            <person name="Sehra H.K."/>
            <person name="Sheridan E."/>
            <person name="Shownkeen R."/>
            <person name="Sims S."/>
            <person name="Skuce C.D."/>
            <person name="Smith M."/>
            <person name="Steward C."/>
            <person name="Subramanian S."/>
            <person name="Sycamore N."/>
            <person name="Tracey A."/>
            <person name="Tromans A."/>
            <person name="Van Helmond Z."/>
            <person name="Wall M."/>
            <person name="Wallis J.M."/>
            <person name="White S."/>
            <person name="Whitehead S.L."/>
            <person name="Wilkinson J.E."/>
            <person name="Willey D.L."/>
            <person name="Williams H."/>
            <person name="Wilming L."/>
            <person name="Wray P.W."/>
            <person name="Wu Z."/>
            <person name="Coulson A."/>
            <person name="Vaudin M."/>
            <person name="Sulston J.E."/>
            <person name="Durbin R.M."/>
            <person name="Hubbard T."/>
            <person name="Wooster R."/>
            <person name="Dunham I."/>
            <person name="Carter N.P."/>
            <person name="McVean G."/>
            <person name="Ross M.T."/>
            <person name="Harrow J."/>
            <person name="Olson M.V."/>
            <person name="Beck S."/>
            <person name="Rogers J."/>
            <person name="Bentley D.R."/>
        </authorList>
    </citation>
    <scope>NUCLEOTIDE SEQUENCE [LARGE SCALE GENOMIC DNA]</scope>
</reference>
<reference key="7">
    <citation type="submission" date="2005-09" db="EMBL/GenBank/DDBJ databases">
        <authorList>
            <person name="Mural R.J."/>
            <person name="Istrail S."/>
            <person name="Sutton G.G."/>
            <person name="Florea L."/>
            <person name="Halpern A.L."/>
            <person name="Mobarry C.M."/>
            <person name="Lippert R."/>
            <person name="Walenz B."/>
            <person name="Shatkay H."/>
            <person name="Dew I."/>
            <person name="Miller J.R."/>
            <person name="Flanigan M.J."/>
            <person name="Edwards N.J."/>
            <person name="Bolanos R."/>
            <person name="Fasulo D."/>
            <person name="Halldorsson B.V."/>
            <person name="Hannenhalli S."/>
            <person name="Turner R."/>
            <person name="Yooseph S."/>
            <person name="Lu F."/>
            <person name="Nusskern D.R."/>
            <person name="Shue B.C."/>
            <person name="Zheng X.H."/>
            <person name="Zhong F."/>
            <person name="Delcher A.L."/>
            <person name="Huson D.H."/>
            <person name="Kravitz S.A."/>
            <person name="Mouchard L."/>
            <person name="Reinert K."/>
            <person name="Remington K.A."/>
            <person name="Clark A.G."/>
            <person name="Waterman M.S."/>
            <person name="Eichler E.E."/>
            <person name="Adams M.D."/>
            <person name="Hunkapiller M.W."/>
            <person name="Myers E.W."/>
            <person name="Venter J.C."/>
        </authorList>
    </citation>
    <scope>NUCLEOTIDE SEQUENCE [LARGE SCALE GENOMIC DNA]</scope>
</reference>
<reference key="8">
    <citation type="journal article" date="2004" name="Genome Res.">
        <title>The status, quality, and expansion of the NIH full-length cDNA project: the Mammalian Gene Collection (MGC).</title>
        <authorList>
            <consortium name="The MGC Project Team"/>
        </authorList>
    </citation>
    <scope>NUCLEOTIDE SEQUENCE [LARGE SCALE MRNA] (ISOFORM 1)</scope>
    <source>
        <tissue>Kidney</tissue>
        <tissue>Lung</tissue>
        <tissue>Testis</tissue>
    </source>
</reference>
<reference key="9">
    <citation type="journal article" date="2012" name="Biochem. J.">
        <title>A global survey of CRM1-dependent nuclear export sequences in the human deubiquitinase family.</title>
        <authorList>
            <person name="Garcia-Santisteban I."/>
            <person name="Banuelos S."/>
            <person name="Rodriguez J.A."/>
        </authorList>
    </citation>
    <scope>SUBCELLULAR LOCATION</scope>
    <scope>NUCLEAR EXPORT SIGNAL</scope>
</reference>
<reference key="10">
    <citation type="journal article" date="2013" name="J. Proteome Res.">
        <title>Toward a comprehensive characterization of a human cancer cell phosphoproteome.</title>
        <authorList>
            <person name="Zhou H."/>
            <person name="Di Palma S."/>
            <person name="Preisinger C."/>
            <person name="Peng M."/>
            <person name="Polat A.N."/>
            <person name="Heck A.J."/>
            <person name="Mohammed S."/>
        </authorList>
    </citation>
    <scope>IDENTIFICATION BY MASS SPECTROMETRY [LARGE SCALE ANALYSIS]</scope>
    <source>
        <tissue>Erythroleukemia</tissue>
    </source>
</reference>
<reference key="11">
    <citation type="journal article" date="2015" name="Proc. Natl. Acad. Sci. U.S.A.">
        <title>BEND3 represses rDNA transcription by stabilizing a NoRC component via USP21 deubiquitinase.</title>
        <authorList>
            <person name="Khan A."/>
            <person name="Giri S."/>
            <person name="Wang Y."/>
            <person name="Chakraborty A."/>
            <person name="Ghosh A.K."/>
            <person name="Anantharaman A."/>
            <person name="Aggarwal V."/>
            <person name="Sathyan K.M."/>
            <person name="Ha T."/>
            <person name="Prasanth K.V."/>
            <person name="Prasanth S.G."/>
        </authorList>
    </citation>
    <scope>FUNCTION</scope>
    <scope>INTERACTION WITH BEND3 AND BAZ2A</scope>
</reference>
<reference key="12">
    <citation type="journal article" date="2020" name="Elife">
        <title>Distinct regulatory ribosomal ubiquitylation events are reversible and hierarchically organized.</title>
        <authorList>
            <person name="Garshott D.M."/>
            <person name="Sundaramoorthy E."/>
            <person name="Leonard M."/>
            <person name="Bennett E.J."/>
        </authorList>
    </citation>
    <scope>FUNCTION</scope>
    <scope>CATALYTIC ACTIVITY</scope>
    <scope>ACTIVE SITE</scope>
    <scope>MUTAGENESIS OF CYS-221</scope>
</reference>
<reference key="13">
    <citation type="journal article" date="2011" name="EMBO Rep.">
        <title>Polyubiquitin binding and cross-reactivity in the USP domain deubiquitinase USP21.</title>
        <authorList>
            <person name="Ye Y."/>
            <person name="Akutsu M."/>
            <person name="Reyes-Turcu F."/>
            <person name="Enchev R.I."/>
            <person name="Wilkinson K.D."/>
            <person name="Komander D."/>
        </authorList>
    </citation>
    <scope>X-RAY CRYSTALLOGRAPHY (2.59 ANGSTROMS) OF 1-75 IN COMPLEX WITH UBIQUITIN AND ZINC</scope>
</reference>
<organism>
    <name type="scientific">Homo sapiens</name>
    <name type="common">Human</name>
    <dbReference type="NCBI Taxonomy" id="9606"/>
    <lineage>
        <taxon>Eukaryota</taxon>
        <taxon>Metazoa</taxon>
        <taxon>Chordata</taxon>
        <taxon>Craniata</taxon>
        <taxon>Vertebrata</taxon>
        <taxon>Euteleostomi</taxon>
        <taxon>Mammalia</taxon>
        <taxon>Eutheria</taxon>
        <taxon>Euarchontoglires</taxon>
        <taxon>Primates</taxon>
        <taxon>Haplorrhini</taxon>
        <taxon>Catarrhini</taxon>
        <taxon>Hominidae</taxon>
        <taxon>Homo</taxon>
    </lineage>
</organism>
<evidence type="ECO:0000250" key="1">
    <source>
        <dbReference type="UniProtKB" id="Q9QZL6"/>
    </source>
</evidence>
<evidence type="ECO:0000255" key="2">
    <source>
        <dbReference type="PROSITE-ProRule" id="PRU10092"/>
    </source>
</evidence>
<evidence type="ECO:0000255" key="3">
    <source>
        <dbReference type="PROSITE-ProRule" id="PRU10093"/>
    </source>
</evidence>
<evidence type="ECO:0000256" key="4">
    <source>
        <dbReference type="SAM" id="MobiDB-lite"/>
    </source>
</evidence>
<evidence type="ECO:0000269" key="5">
    <source>
    </source>
</evidence>
<evidence type="ECO:0000269" key="6">
    <source>
    </source>
</evidence>
<evidence type="ECO:0000269" key="7">
    <source>
    </source>
</evidence>
<evidence type="ECO:0000269" key="8">
    <source>
    </source>
</evidence>
<evidence type="ECO:0000269" key="9">
    <source>
    </source>
</evidence>
<evidence type="ECO:0000303" key="10">
    <source>
    </source>
</evidence>
<evidence type="ECO:0000303" key="11">
    <source>
    </source>
</evidence>
<evidence type="ECO:0000303" key="12">
    <source>
    </source>
</evidence>
<evidence type="ECO:0000303" key="13">
    <source ref="5"/>
</evidence>
<evidence type="ECO:0000305" key="14"/>
<evidence type="ECO:0000305" key="15">
    <source>
    </source>
</evidence>
<evidence type="ECO:0000305" key="16">
    <source>
    </source>
</evidence>
<evidence type="ECO:0000312" key="17">
    <source>
        <dbReference type="HGNC" id="HGNC:12620"/>
    </source>
</evidence>
<evidence type="ECO:0007744" key="18">
    <source>
        <dbReference type="PDB" id="2Y5B"/>
    </source>
</evidence>
<evidence type="ECO:0007829" key="19">
    <source>
        <dbReference type="PDB" id="2Y5B"/>
    </source>
</evidence>
<evidence type="ECO:0007829" key="20">
    <source>
        <dbReference type="PDB" id="3I3T"/>
    </source>
</evidence>
<evidence type="ECO:0007829" key="21">
    <source>
        <dbReference type="PDB" id="3MTN"/>
    </source>
</evidence>
<proteinExistence type="evidence at protein level"/>
<name>UBP21_HUMAN</name>
<gene>
    <name evidence="11 17" type="primary">USP21</name>
    <name evidence="10" type="synonym">USP23</name>
    <name type="ORF">PP1490</name>
</gene>
<dbReference type="EC" id="3.4.19.12" evidence="5 9"/>
<dbReference type="EMBL" id="AF177758">
    <property type="protein sequence ID" value="AAD54321.1"/>
    <property type="molecule type" value="mRNA"/>
</dbReference>
<dbReference type="EMBL" id="AF233442">
    <property type="protein sequence ID" value="AAF61308.1"/>
    <property type="status" value="ALT_FRAME"/>
    <property type="molecule type" value="mRNA"/>
</dbReference>
<dbReference type="EMBL" id="AK292319">
    <property type="protein sequence ID" value="BAF85008.1"/>
    <property type="molecule type" value="mRNA"/>
</dbReference>
<dbReference type="EMBL" id="AF217979">
    <property type="protein sequence ID" value="AAG17222.1"/>
    <property type="status" value="ALT_FRAME"/>
    <property type="molecule type" value="mRNA"/>
</dbReference>
<dbReference type="EMBL" id="AB208899">
    <property type="protein sequence ID" value="BAD92136.1"/>
    <property type="status" value="ALT_INIT"/>
    <property type="molecule type" value="mRNA"/>
</dbReference>
<dbReference type="EMBL" id="AL590714">
    <property type="status" value="NOT_ANNOTATED_CDS"/>
    <property type="molecule type" value="Genomic_DNA"/>
</dbReference>
<dbReference type="EMBL" id="CH471121">
    <property type="protein sequence ID" value="EAW52644.1"/>
    <property type="molecule type" value="Genomic_DNA"/>
</dbReference>
<dbReference type="EMBL" id="BC003130">
    <property type="protein sequence ID" value="AAH03130.2"/>
    <property type="molecule type" value="mRNA"/>
</dbReference>
<dbReference type="EMBL" id="BC090946">
    <property type="protein sequence ID" value="AAH90946.1"/>
    <property type="molecule type" value="mRNA"/>
</dbReference>
<dbReference type="EMBL" id="BC136291">
    <property type="protein sequence ID" value="AAI36292.1"/>
    <property type="molecule type" value="mRNA"/>
</dbReference>
<dbReference type="CCDS" id="CCDS30920.1">
    <molecule id="Q9UK80-1"/>
</dbReference>
<dbReference type="CCDS" id="CCDS81392.1">
    <molecule id="Q9UK80-3"/>
</dbReference>
<dbReference type="RefSeq" id="NP_001014443.1">
    <molecule id="Q9UK80-1"/>
    <property type="nucleotide sequence ID" value="NM_001014443.3"/>
</dbReference>
<dbReference type="RefSeq" id="NP_001306777.1">
    <molecule id="Q9UK80-3"/>
    <property type="nucleotide sequence ID" value="NM_001319848.2"/>
</dbReference>
<dbReference type="RefSeq" id="NP_036607.3">
    <molecule id="Q9UK80-1"/>
    <property type="nucleotide sequence ID" value="NM_012475.4"/>
</dbReference>
<dbReference type="PDB" id="2Y5B">
    <property type="method" value="X-ray"/>
    <property type="resolution" value="2.70 A"/>
    <property type="chains" value="A/E=196-565"/>
</dbReference>
<dbReference type="PDB" id="3I3T">
    <property type="method" value="X-ray"/>
    <property type="resolution" value="2.59 A"/>
    <property type="chains" value="A/C/E/G=209-563"/>
</dbReference>
<dbReference type="PDB" id="3MTN">
    <property type="method" value="X-ray"/>
    <property type="resolution" value="2.70 A"/>
    <property type="chains" value="A/C=209-562"/>
</dbReference>
<dbReference type="PDBsum" id="2Y5B"/>
<dbReference type="PDBsum" id="3I3T"/>
<dbReference type="PDBsum" id="3MTN"/>
<dbReference type="SMR" id="Q9UK80"/>
<dbReference type="BioGRID" id="117950">
    <property type="interactions" value="162"/>
</dbReference>
<dbReference type="DIP" id="DIP-31255N"/>
<dbReference type="FunCoup" id="Q9UK80">
    <property type="interactions" value="1155"/>
</dbReference>
<dbReference type="IntAct" id="Q9UK80">
    <property type="interactions" value="30"/>
</dbReference>
<dbReference type="MINT" id="Q9UK80"/>
<dbReference type="STRING" id="9606.ENSP00000356981"/>
<dbReference type="BindingDB" id="Q9UK80"/>
<dbReference type="ChEMBL" id="CHEMBL2157852"/>
<dbReference type="GuidetoPHARMACOLOGY" id="3223"/>
<dbReference type="MEROPS" id="C19.034"/>
<dbReference type="GlyGen" id="Q9UK80">
    <property type="glycosylation" value="1 site"/>
</dbReference>
<dbReference type="iPTMnet" id="Q9UK80"/>
<dbReference type="PhosphoSitePlus" id="Q9UK80"/>
<dbReference type="BioMuta" id="USP21"/>
<dbReference type="DMDM" id="10720334"/>
<dbReference type="jPOST" id="Q9UK80"/>
<dbReference type="MassIVE" id="Q9UK80"/>
<dbReference type="PaxDb" id="9606-ENSP00000356981"/>
<dbReference type="PeptideAtlas" id="Q9UK80"/>
<dbReference type="ProteomicsDB" id="84737">
    <molecule id="Q9UK80-1"/>
</dbReference>
<dbReference type="ProteomicsDB" id="84738">
    <molecule id="Q9UK80-2"/>
</dbReference>
<dbReference type="ProteomicsDB" id="84739">
    <molecule id="Q9UK80-3"/>
</dbReference>
<dbReference type="Antibodypedia" id="34297">
    <property type="antibodies" value="340 antibodies from 30 providers"/>
</dbReference>
<dbReference type="DNASU" id="27005"/>
<dbReference type="Ensembl" id="ENST00000289865.12">
    <molecule id="Q9UK80-1"/>
    <property type="protein sequence ID" value="ENSP00000289865.8"/>
    <property type="gene ID" value="ENSG00000143258.17"/>
</dbReference>
<dbReference type="Ensembl" id="ENST00000368001.1">
    <molecule id="Q9UK80-3"/>
    <property type="protein sequence ID" value="ENSP00000356980.1"/>
    <property type="gene ID" value="ENSG00000143258.17"/>
</dbReference>
<dbReference type="Ensembl" id="ENST00000368002.8">
    <molecule id="Q9UK80-1"/>
    <property type="protein sequence ID" value="ENSP00000356981.3"/>
    <property type="gene ID" value="ENSG00000143258.17"/>
</dbReference>
<dbReference type="GeneID" id="27005"/>
<dbReference type="KEGG" id="hsa:27005"/>
<dbReference type="MANE-Select" id="ENST00000368002.8">
    <property type="protein sequence ID" value="ENSP00000356981.3"/>
    <property type="RefSeq nucleotide sequence ID" value="NM_001014443.3"/>
    <property type="RefSeq protein sequence ID" value="NP_001014443.1"/>
</dbReference>
<dbReference type="UCSC" id="uc031vci.2">
    <molecule id="Q9UK80-1"/>
    <property type="organism name" value="human"/>
</dbReference>
<dbReference type="AGR" id="HGNC:12620"/>
<dbReference type="CTD" id="27005"/>
<dbReference type="DisGeNET" id="27005"/>
<dbReference type="GeneCards" id="USP21"/>
<dbReference type="HGNC" id="HGNC:12620">
    <property type="gene designation" value="USP21"/>
</dbReference>
<dbReference type="HPA" id="ENSG00000143258">
    <property type="expression patterns" value="Low tissue specificity"/>
</dbReference>
<dbReference type="MalaCards" id="USP21"/>
<dbReference type="MIM" id="604729">
    <property type="type" value="gene"/>
</dbReference>
<dbReference type="neXtProt" id="NX_Q9UK80"/>
<dbReference type="OpenTargets" id="ENSG00000143258"/>
<dbReference type="PharmGKB" id="PA37246"/>
<dbReference type="VEuPathDB" id="HostDB:ENSG00000143258"/>
<dbReference type="eggNOG" id="KOG1868">
    <property type="taxonomic scope" value="Eukaryota"/>
</dbReference>
<dbReference type="GeneTree" id="ENSGT00940000155545"/>
<dbReference type="HOGENOM" id="CLU_035237_0_0_1"/>
<dbReference type="InParanoid" id="Q9UK80"/>
<dbReference type="OMA" id="RYWAQYY"/>
<dbReference type="OrthoDB" id="265306at2759"/>
<dbReference type="PAN-GO" id="Q9UK80">
    <property type="GO annotations" value="1 GO annotation based on evolutionary models"/>
</dbReference>
<dbReference type="PhylomeDB" id="Q9UK80"/>
<dbReference type="TreeFam" id="TF106277"/>
<dbReference type="BRENDA" id="3.4.19.12">
    <property type="organism ID" value="2681"/>
</dbReference>
<dbReference type="PathwayCommons" id="Q9UK80"/>
<dbReference type="Reactome" id="R-HSA-5357786">
    <property type="pathway name" value="TNFR1-induced proapoptotic signaling"/>
</dbReference>
<dbReference type="Reactome" id="R-HSA-5357905">
    <property type="pathway name" value="Regulation of TNFR1 signaling"/>
</dbReference>
<dbReference type="Reactome" id="R-HSA-5357956">
    <property type="pathway name" value="TNFR1-induced NF-kappa-B signaling pathway"/>
</dbReference>
<dbReference type="Reactome" id="R-HSA-5689880">
    <property type="pathway name" value="Ub-specific processing proteases"/>
</dbReference>
<dbReference type="SignaLink" id="Q9UK80"/>
<dbReference type="SIGNOR" id="Q9UK80"/>
<dbReference type="BioGRID-ORCS" id="27005">
    <property type="hits" value="13 hits in 1200 CRISPR screens"/>
</dbReference>
<dbReference type="CD-CODE" id="8C2F96ED">
    <property type="entry name" value="Centrosome"/>
</dbReference>
<dbReference type="ChiTaRS" id="USP21">
    <property type="organism name" value="human"/>
</dbReference>
<dbReference type="EvolutionaryTrace" id="Q9UK80"/>
<dbReference type="GenomeRNAi" id="27005"/>
<dbReference type="Pharos" id="Q9UK80">
    <property type="development level" value="Tbio"/>
</dbReference>
<dbReference type="PRO" id="PR:Q9UK80"/>
<dbReference type="Proteomes" id="UP000005640">
    <property type="component" value="Chromosome 1"/>
</dbReference>
<dbReference type="RNAct" id="Q9UK80">
    <property type="molecule type" value="protein"/>
</dbReference>
<dbReference type="Bgee" id="ENSG00000143258">
    <property type="expression patterns" value="Expressed in right uterine tube and 192 other cell types or tissues"/>
</dbReference>
<dbReference type="ExpressionAtlas" id="Q9UK80">
    <property type="expression patterns" value="baseline and differential"/>
</dbReference>
<dbReference type="GO" id="GO:0005737">
    <property type="term" value="C:cytoplasm"/>
    <property type="evidence" value="ECO:0000318"/>
    <property type="project" value="GO_Central"/>
</dbReference>
<dbReference type="GO" id="GO:0005829">
    <property type="term" value="C:cytosol"/>
    <property type="evidence" value="ECO:0000314"/>
    <property type="project" value="HPA"/>
</dbReference>
<dbReference type="GO" id="GO:0005654">
    <property type="term" value="C:nucleoplasm"/>
    <property type="evidence" value="ECO:0000314"/>
    <property type="project" value="HPA"/>
</dbReference>
<dbReference type="GO" id="GO:0005886">
    <property type="term" value="C:plasma membrane"/>
    <property type="evidence" value="ECO:0000314"/>
    <property type="project" value="HPA"/>
</dbReference>
<dbReference type="GO" id="GO:0004843">
    <property type="term" value="F:cysteine-type deubiquitinase activity"/>
    <property type="evidence" value="ECO:0000314"/>
    <property type="project" value="UniProtKB"/>
</dbReference>
<dbReference type="GO" id="GO:0008234">
    <property type="term" value="F:cysteine-type peptidase activity"/>
    <property type="evidence" value="ECO:0000315"/>
    <property type="project" value="UniProtKB"/>
</dbReference>
<dbReference type="GO" id="GO:0019784">
    <property type="term" value="F:deNEDDylase activity"/>
    <property type="evidence" value="ECO:0000314"/>
    <property type="project" value="UniProtKB"/>
</dbReference>
<dbReference type="GO" id="GO:0046872">
    <property type="term" value="F:metal ion binding"/>
    <property type="evidence" value="ECO:0007669"/>
    <property type="project" value="UniProtKB-KW"/>
</dbReference>
<dbReference type="GO" id="GO:0003713">
    <property type="term" value="F:transcription coactivator activity"/>
    <property type="evidence" value="ECO:0000250"/>
    <property type="project" value="UniProtKB"/>
</dbReference>
<dbReference type="GO" id="GO:0016579">
    <property type="term" value="P:protein deubiquitination"/>
    <property type="evidence" value="ECO:0000314"/>
    <property type="project" value="UniProt"/>
</dbReference>
<dbReference type="GO" id="GO:0006508">
    <property type="term" value="P:proteolysis"/>
    <property type="evidence" value="ECO:0007669"/>
    <property type="project" value="UniProtKB-KW"/>
</dbReference>
<dbReference type="GO" id="GO:0045815">
    <property type="term" value="P:transcription initiation-coupled chromatin remodeling"/>
    <property type="evidence" value="ECO:0000250"/>
    <property type="project" value="UniProtKB"/>
</dbReference>
<dbReference type="CDD" id="cd02674">
    <property type="entry name" value="Peptidase_C19R"/>
    <property type="match status" value="1"/>
</dbReference>
<dbReference type="FunFam" id="3.90.70.10:FF:000058">
    <property type="entry name" value="Ubiquitin carboxyl-terminal hydrolase 21"/>
    <property type="match status" value="1"/>
</dbReference>
<dbReference type="Gene3D" id="3.90.70.10">
    <property type="entry name" value="Cysteine proteinases"/>
    <property type="match status" value="1"/>
</dbReference>
<dbReference type="InterPro" id="IPR038765">
    <property type="entry name" value="Papain-like_cys_pep_sf"/>
</dbReference>
<dbReference type="InterPro" id="IPR001394">
    <property type="entry name" value="Peptidase_C19_UCH"/>
</dbReference>
<dbReference type="InterPro" id="IPR050185">
    <property type="entry name" value="Ub_carboxyl-term_hydrolase"/>
</dbReference>
<dbReference type="InterPro" id="IPR018200">
    <property type="entry name" value="USP_CS"/>
</dbReference>
<dbReference type="InterPro" id="IPR028889">
    <property type="entry name" value="USP_dom"/>
</dbReference>
<dbReference type="PANTHER" id="PTHR21646">
    <property type="entry name" value="UBIQUITIN CARBOXYL-TERMINAL HYDROLASE"/>
    <property type="match status" value="1"/>
</dbReference>
<dbReference type="PANTHER" id="PTHR21646:SF6">
    <property type="entry name" value="UBIQUITIN CARBOXYL-TERMINAL HYDROLASE 21"/>
    <property type="match status" value="1"/>
</dbReference>
<dbReference type="Pfam" id="PF00443">
    <property type="entry name" value="UCH"/>
    <property type="match status" value="1"/>
</dbReference>
<dbReference type="SUPFAM" id="SSF54001">
    <property type="entry name" value="Cysteine proteinases"/>
    <property type="match status" value="1"/>
</dbReference>
<dbReference type="PROSITE" id="PS00972">
    <property type="entry name" value="USP_1"/>
    <property type="match status" value="1"/>
</dbReference>
<dbReference type="PROSITE" id="PS00973">
    <property type="entry name" value="USP_2"/>
    <property type="match status" value="1"/>
</dbReference>
<dbReference type="PROSITE" id="PS50235">
    <property type="entry name" value="USP_3"/>
    <property type="match status" value="1"/>
</dbReference>
<protein>
    <recommendedName>
        <fullName evidence="14">Ubiquitin carboxyl-terminal hydrolase 21</fullName>
        <ecNumber evidence="5 9">3.4.19.12</ecNumber>
    </recommendedName>
    <alternativeName>
        <fullName evidence="11">Deubiquitinating enzyme 21</fullName>
    </alternativeName>
    <alternativeName>
        <fullName evidence="11">Ubiquitin thioesterase 21</fullName>
    </alternativeName>
    <alternativeName>
        <fullName evidence="11">Ubiquitin-specific-processing protease 21</fullName>
    </alternativeName>
</protein>